<keyword id="KW-0963">Cytoplasm</keyword>
<keyword id="KW-0396">Initiation factor</keyword>
<keyword id="KW-0648">Protein biosynthesis</keyword>
<keyword id="KW-1185">Reference proteome</keyword>
<keyword id="KW-0694">RNA-binding</keyword>
<keyword id="KW-0699">rRNA-binding</keyword>
<accession>P65117</accession>
<accession>Q9I0L9</accession>
<comment type="function">
    <text evidence="1">One of the essential components for the initiation of protein synthesis. Stabilizes the binding of IF-2 and IF-3 on the 30S subunit to which N-formylmethionyl-tRNA(fMet) subsequently binds. Helps modulate mRNA selection, yielding the 30S pre-initiation complex (PIC). Upon addition of the 50S ribosomal subunit IF-1, IF-2 and IF-3 are released leaving the mature 70S translation initiation complex.</text>
</comment>
<comment type="subunit">
    <text evidence="1">Component of the 30S ribosomal translation pre-initiation complex which assembles on the 30S ribosome in the order IF-2 and IF-3, IF-1 and N-formylmethionyl-tRNA(fMet); mRNA recruitment can occur at any time during PIC assembly.</text>
</comment>
<comment type="subcellular location">
    <subcellularLocation>
        <location evidence="1">Cytoplasm</location>
    </subcellularLocation>
</comment>
<comment type="similarity">
    <text evidence="1">Belongs to the IF-1 family.</text>
</comment>
<name>IF1_PSEPK</name>
<dbReference type="EMBL" id="AE015451">
    <property type="protein sequence ID" value="AAN69601.1"/>
    <property type="molecule type" value="Genomic_DNA"/>
</dbReference>
<dbReference type="RefSeq" id="NP_746137.1">
    <property type="nucleotide sequence ID" value="NC_002947.4"/>
</dbReference>
<dbReference type="RefSeq" id="WP_002553999.1">
    <property type="nucleotide sequence ID" value="NZ_CP169744.1"/>
</dbReference>
<dbReference type="SMR" id="P65117"/>
<dbReference type="STRING" id="160488.PP_4007"/>
<dbReference type="PaxDb" id="160488-PP_4007"/>
<dbReference type="GeneID" id="98638452"/>
<dbReference type="KEGG" id="ppu:PP_4007"/>
<dbReference type="PATRIC" id="fig|160488.4.peg.4263"/>
<dbReference type="eggNOG" id="COG0361">
    <property type="taxonomic scope" value="Bacteria"/>
</dbReference>
<dbReference type="HOGENOM" id="CLU_151267_1_0_6"/>
<dbReference type="OrthoDB" id="9803250at2"/>
<dbReference type="PhylomeDB" id="P65117"/>
<dbReference type="BioCyc" id="PPUT160488:G1G01-4274-MONOMER"/>
<dbReference type="PRO" id="PR:P65117"/>
<dbReference type="Proteomes" id="UP000000556">
    <property type="component" value="Chromosome"/>
</dbReference>
<dbReference type="GO" id="GO:0005829">
    <property type="term" value="C:cytosol"/>
    <property type="evidence" value="ECO:0007669"/>
    <property type="project" value="TreeGrafter"/>
</dbReference>
<dbReference type="GO" id="GO:0043022">
    <property type="term" value="F:ribosome binding"/>
    <property type="evidence" value="ECO:0007669"/>
    <property type="project" value="UniProtKB-UniRule"/>
</dbReference>
<dbReference type="GO" id="GO:0019843">
    <property type="term" value="F:rRNA binding"/>
    <property type="evidence" value="ECO:0007669"/>
    <property type="project" value="UniProtKB-UniRule"/>
</dbReference>
<dbReference type="GO" id="GO:0003743">
    <property type="term" value="F:translation initiation factor activity"/>
    <property type="evidence" value="ECO:0007669"/>
    <property type="project" value="UniProtKB-UniRule"/>
</dbReference>
<dbReference type="CDD" id="cd04451">
    <property type="entry name" value="S1_IF1"/>
    <property type="match status" value="1"/>
</dbReference>
<dbReference type="FunFam" id="2.40.50.140:FF:000002">
    <property type="entry name" value="Translation initiation factor IF-1"/>
    <property type="match status" value="1"/>
</dbReference>
<dbReference type="Gene3D" id="2.40.50.140">
    <property type="entry name" value="Nucleic acid-binding proteins"/>
    <property type="match status" value="1"/>
</dbReference>
<dbReference type="HAMAP" id="MF_00075">
    <property type="entry name" value="IF_1"/>
    <property type="match status" value="1"/>
</dbReference>
<dbReference type="InterPro" id="IPR012340">
    <property type="entry name" value="NA-bd_OB-fold"/>
</dbReference>
<dbReference type="InterPro" id="IPR006196">
    <property type="entry name" value="RNA-binding_domain_S1_IF1"/>
</dbReference>
<dbReference type="InterPro" id="IPR003029">
    <property type="entry name" value="S1_domain"/>
</dbReference>
<dbReference type="InterPro" id="IPR004368">
    <property type="entry name" value="TIF_IF1"/>
</dbReference>
<dbReference type="NCBIfam" id="TIGR00008">
    <property type="entry name" value="infA"/>
    <property type="match status" value="1"/>
</dbReference>
<dbReference type="PANTHER" id="PTHR33370">
    <property type="entry name" value="TRANSLATION INITIATION FACTOR IF-1, CHLOROPLASTIC"/>
    <property type="match status" value="1"/>
</dbReference>
<dbReference type="PANTHER" id="PTHR33370:SF1">
    <property type="entry name" value="TRANSLATION INITIATION FACTOR IF-1, CHLOROPLASTIC"/>
    <property type="match status" value="1"/>
</dbReference>
<dbReference type="Pfam" id="PF01176">
    <property type="entry name" value="eIF-1a"/>
    <property type="match status" value="1"/>
</dbReference>
<dbReference type="SMART" id="SM00316">
    <property type="entry name" value="S1"/>
    <property type="match status" value="1"/>
</dbReference>
<dbReference type="SUPFAM" id="SSF50249">
    <property type="entry name" value="Nucleic acid-binding proteins"/>
    <property type="match status" value="1"/>
</dbReference>
<dbReference type="PROSITE" id="PS50832">
    <property type="entry name" value="S1_IF1_TYPE"/>
    <property type="match status" value="1"/>
</dbReference>
<reference key="1">
    <citation type="journal article" date="2002" name="Environ. Microbiol.">
        <title>Complete genome sequence and comparative analysis of the metabolically versatile Pseudomonas putida KT2440.</title>
        <authorList>
            <person name="Nelson K.E."/>
            <person name="Weinel C."/>
            <person name="Paulsen I.T."/>
            <person name="Dodson R.J."/>
            <person name="Hilbert H."/>
            <person name="Martins dos Santos V.A.P."/>
            <person name="Fouts D.E."/>
            <person name="Gill S.R."/>
            <person name="Pop M."/>
            <person name="Holmes M."/>
            <person name="Brinkac L.M."/>
            <person name="Beanan M.J."/>
            <person name="DeBoy R.T."/>
            <person name="Daugherty S.C."/>
            <person name="Kolonay J.F."/>
            <person name="Madupu R."/>
            <person name="Nelson W.C."/>
            <person name="White O."/>
            <person name="Peterson J.D."/>
            <person name="Khouri H.M."/>
            <person name="Hance I."/>
            <person name="Chris Lee P."/>
            <person name="Holtzapple E.K."/>
            <person name="Scanlan D."/>
            <person name="Tran K."/>
            <person name="Moazzez A."/>
            <person name="Utterback T.R."/>
            <person name="Rizzo M."/>
            <person name="Lee K."/>
            <person name="Kosack D."/>
            <person name="Moestl D."/>
            <person name="Wedler H."/>
            <person name="Lauber J."/>
            <person name="Stjepandic D."/>
            <person name="Hoheisel J."/>
            <person name="Straetz M."/>
            <person name="Heim S."/>
            <person name="Kiewitz C."/>
            <person name="Eisen J.A."/>
            <person name="Timmis K.N."/>
            <person name="Duesterhoeft A."/>
            <person name="Tuemmler B."/>
            <person name="Fraser C.M."/>
        </authorList>
    </citation>
    <scope>NUCLEOTIDE SEQUENCE [LARGE SCALE GENOMIC DNA]</scope>
    <source>
        <strain>ATCC 47054 / DSM 6125 / CFBP 8728 / NCIMB 11950 / KT2440</strain>
    </source>
</reference>
<feature type="chain" id="PRO_0000095845" description="Translation initiation factor IF-1">
    <location>
        <begin position="1"/>
        <end position="72"/>
    </location>
</feature>
<feature type="domain" description="S1-like" evidence="1">
    <location>
        <begin position="1"/>
        <end position="72"/>
    </location>
</feature>
<proteinExistence type="inferred from homology"/>
<organism>
    <name type="scientific">Pseudomonas putida (strain ATCC 47054 / DSM 6125 / CFBP 8728 / NCIMB 11950 / KT2440)</name>
    <dbReference type="NCBI Taxonomy" id="160488"/>
    <lineage>
        <taxon>Bacteria</taxon>
        <taxon>Pseudomonadati</taxon>
        <taxon>Pseudomonadota</taxon>
        <taxon>Gammaproteobacteria</taxon>
        <taxon>Pseudomonadales</taxon>
        <taxon>Pseudomonadaceae</taxon>
        <taxon>Pseudomonas</taxon>
    </lineage>
</organism>
<sequence>MSKEDSFEMEGTVVDTLPNTMFRVELENGHVVTAHISGKMRKNYIRILTGDKVRVELTPYDLSKGRITYRAR</sequence>
<protein>
    <recommendedName>
        <fullName evidence="1">Translation initiation factor IF-1</fullName>
    </recommendedName>
</protein>
<gene>
    <name evidence="1" type="primary">infA</name>
    <name type="ordered locus">PP_4007</name>
</gene>
<evidence type="ECO:0000255" key="1">
    <source>
        <dbReference type="HAMAP-Rule" id="MF_00075"/>
    </source>
</evidence>